<evidence type="ECO:0000255" key="1">
    <source>
        <dbReference type="HAMAP-Rule" id="MF_01523"/>
    </source>
</evidence>
<dbReference type="EC" id="2.1.1.242" evidence="1"/>
<dbReference type="EMBL" id="AE016828">
    <property type="protein sequence ID" value="AAO91367.1"/>
    <property type="molecule type" value="Genomic_DNA"/>
</dbReference>
<dbReference type="RefSeq" id="NP_820853.1">
    <property type="nucleotide sequence ID" value="NC_002971.3"/>
</dbReference>
<dbReference type="RefSeq" id="WP_005770277.1">
    <property type="nucleotide sequence ID" value="NZ_CCYB01000008.1"/>
</dbReference>
<dbReference type="SMR" id="Q83AK9"/>
<dbReference type="STRING" id="227377.CBU_1876"/>
<dbReference type="EnsemblBacteria" id="AAO91367">
    <property type="protein sequence ID" value="AAO91367"/>
    <property type="gene ID" value="CBU_1876"/>
</dbReference>
<dbReference type="GeneID" id="1209789"/>
<dbReference type="KEGG" id="cbu:CBU_1876"/>
<dbReference type="PATRIC" id="fig|227377.7.peg.1858"/>
<dbReference type="eggNOG" id="COG0742">
    <property type="taxonomic scope" value="Bacteria"/>
</dbReference>
<dbReference type="HOGENOM" id="CLU_076324_0_1_6"/>
<dbReference type="OrthoDB" id="3191794at2"/>
<dbReference type="Proteomes" id="UP000002671">
    <property type="component" value="Chromosome"/>
</dbReference>
<dbReference type="GO" id="GO:0005737">
    <property type="term" value="C:cytoplasm"/>
    <property type="evidence" value="ECO:0007669"/>
    <property type="project" value="UniProtKB-SubCell"/>
</dbReference>
<dbReference type="GO" id="GO:0036308">
    <property type="term" value="F:16S rRNA (guanine(1516)-N(2))-methyltransferase activity"/>
    <property type="evidence" value="ECO:0000318"/>
    <property type="project" value="GO_Central"/>
</dbReference>
<dbReference type="GO" id="GO:0070475">
    <property type="term" value="P:rRNA base methylation"/>
    <property type="evidence" value="ECO:0000318"/>
    <property type="project" value="GO_Central"/>
</dbReference>
<dbReference type="CDD" id="cd02440">
    <property type="entry name" value="AdoMet_MTases"/>
    <property type="match status" value="1"/>
</dbReference>
<dbReference type="Gene3D" id="3.40.50.150">
    <property type="entry name" value="Vaccinia Virus protein VP39"/>
    <property type="match status" value="1"/>
</dbReference>
<dbReference type="HAMAP" id="MF_01523">
    <property type="entry name" value="16SrRNA_methyltr_J"/>
    <property type="match status" value="1"/>
</dbReference>
<dbReference type="InterPro" id="IPR007536">
    <property type="entry name" value="16SrRNA_methylTrfase_J"/>
</dbReference>
<dbReference type="InterPro" id="IPR029063">
    <property type="entry name" value="SAM-dependent_MTases_sf"/>
</dbReference>
<dbReference type="PANTHER" id="PTHR36112">
    <property type="entry name" value="RIBOSOMAL RNA SMALL SUBUNIT METHYLTRANSFERASE J"/>
    <property type="match status" value="1"/>
</dbReference>
<dbReference type="PANTHER" id="PTHR36112:SF1">
    <property type="entry name" value="RIBOSOMAL RNA SMALL SUBUNIT METHYLTRANSFERASE J"/>
    <property type="match status" value="1"/>
</dbReference>
<dbReference type="Pfam" id="PF04445">
    <property type="entry name" value="SAM_MT"/>
    <property type="match status" value="1"/>
</dbReference>
<dbReference type="SUPFAM" id="SSF53335">
    <property type="entry name" value="S-adenosyl-L-methionine-dependent methyltransferases"/>
    <property type="match status" value="1"/>
</dbReference>
<feature type="chain" id="PRO_0000212062" description="Ribosomal RNA small subunit methyltransferase J">
    <location>
        <begin position="1"/>
        <end position="254"/>
    </location>
</feature>
<feature type="binding site" evidence="1">
    <location>
        <begin position="107"/>
        <end position="108"/>
    </location>
    <ligand>
        <name>S-adenosyl-L-methionine</name>
        <dbReference type="ChEBI" id="CHEBI:59789"/>
    </ligand>
</feature>
<feature type="binding site" evidence="1">
    <location>
        <begin position="123"/>
        <end position="124"/>
    </location>
    <ligand>
        <name>S-adenosyl-L-methionine</name>
        <dbReference type="ChEBI" id="CHEBI:59789"/>
    </ligand>
</feature>
<feature type="binding site" evidence="1">
    <location>
        <position position="174"/>
    </location>
    <ligand>
        <name>S-adenosyl-L-methionine</name>
        <dbReference type="ChEBI" id="CHEBI:59789"/>
    </ligand>
</feature>
<keyword id="KW-0963">Cytoplasm</keyword>
<keyword id="KW-0489">Methyltransferase</keyword>
<keyword id="KW-1185">Reference proteome</keyword>
<keyword id="KW-0698">rRNA processing</keyword>
<keyword id="KW-0949">S-adenosyl-L-methionine</keyword>
<keyword id="KW-0808">Transferase</keyword>
<accession>Q83AK9</accession>
<reference key="1">
    <citation type="journal article" date="2003" name="Proc. Natl. Acad. Sci. U.S.A.">
        <title>Complete genome sequence of the Q-fever pathogen, Coxiella burnetii.</title>
        <authorList>
            <person name="Seshadri R."/>
            <person name="Paulsen I.T."/>
            <person name="Eisen J.A."/>
            <person name="Read T.D."/>
            <person name="Nelson K.E."/>
            <person name="Nelson W.C."/>
            <person name="Ward N.L."/>
            <person name="Tettelin H."/>
            <person name="Davidsen T.M."/>
            <person name="Beanan M.J."/>
            <person name="DeBoy R.T."/>
            <person name="Daugherty S.C."/>
            <person name="Brinkac L.M."/>
            <person name="Madupu R."/>
            <person name="Dodson R.J."/>
            <person name="Khouri H.M."/>
            <person name="Lee K.H."/>
            <person name="Carty H.A."/>
            <person name="Scanlan D."/>
            <person name="Heinzen R.A."/>
            <person name="Thompson H.A."/>
            <person name="Samuel J.E."/>
            <person name="Fraser C.M."/>
            <person name="Heidelberg J.F."/>
        </authorList>
    </citation>
    <scope>NUCLEOTIDE SEQUENCE [LARGE SCALE GENOMIC DNA]</scope>
    <source>
        <strain>RSA 493 / Nine Mile phase I</strain>
    </source>
</reference>
<proteinExistence type="inferred from homology"/>
<name>RSMJ_COXBU</name>
<organism>
    <name type="scientific">Coxiella burnetii (strain RSA 493 / Nine Mile phase I)</name>
    <dbReference type="NCBI Taxonomy" id="227377"/>
    <lineage>
        <taxon>Bacteria</taxon>
        <taxon>Pseudomonadati</taxon>
        <taxon>Pseudomonadota</taxon>
        <taxon>Gammaproteobacteria</taxon>
        <taxon>Legionellales</taxon>
        <taxon>Coxiellaceae</taxon>
        <taxon>Coxiella</taxon>
    </lineage>
</organism>
<comment type="function">
    <text evidence="1">Specifically methylates the guanosine in position 1516 of 16S rRNA.</text>
</comment>
<comment type="catalytic activity">
    <reaction evidence="1">
        <text>guanosine(1516) in 16S rRNA + S-adenosyl-L-methionine = N(2)-methylguanosine(1516) in 16S rRNA + S-adenosyl-L-homocysteine + H(+)</text>
        <dbReference type="Rhea" id="RHEA:43220"/>
        <dbReference type="Rhea" id="RHEA-COMP:10412"/>
        <dbReference type="Rhea" id="RHEA-COMP:10413"/>
        <dbReference type="ChEBI" id="CHEBI:15378"/>
        <dbReference type="ChEBI" id="CHEBI:57856"/>
        <dbReference type="ChEBI" id="CHEBI:59789"/>
        <dbReference type="ChEBI" id="CHEBI:74269"/>
        <dbReference type="ChEBI" id="CHEBI:74481"/>
        <dbReference type="EC" id="2.1.1.242"/>
    </reaction>
</comment>
<comment type="subcellular location">
    <subcellularLocation>
        <location evidence="1">Cytoplasm</location>
    </subcellularLocation>
</comment>
<comment type="similarity">
    <text evidence="1">Belongs to the methyltransferase superfamily. RsmJ family.</text>
</comment>
<protein>
    <recommendedName>
        <fullName evidence="1">Ribosomal RNA small subunit methyltransferase J</fullName>
        <ecNumber evidence="1">2.1.1.242</ecNumber>
    </recommendedName>
    <alternativeName>
        <fullName evidence="1">16S rRNA m2G1516 methyltransferase</fullName>
    </alternativeName>
    <alternativeName>
        <fullName evidence="1">rRNA (guanine-N(2)-)-methyltransferase</fullName>
    </alternativeName>
</protein>
<gene>
    <name evidence="1" type="primary">rsmJ</name>
    <name type="ordered locus">CBU_1876</name>
</gene>
<sequence length="254" mass="28311">MNDTLAITYSTPARLSEAEKLARQMKLPLVSLNSTDYSFLLVFTPAHLELRSTGTKAPGPLYVDFLKGATAHRRLFGGGRSQLIVRAVGLKSHPHPTILDLTAGLGRDAFVLANLGCDVLMIERNPVIALLLRDGLERAQSVEWFKSLKLELIEIDAQIYLSTLKKQFDVIYMDPMYPIRKKSALVKKEMRILRRLVGADDDAPQLLALALKKAKHRVVIKRPRLSNPLPGPAPDVVYEGKSSRFDVYLLKPSS</sequence>